<reference key="1">
    <citation type="journal article" date="2007" name="PLoS ONE">
        <title>Analysis of the neurotoxin complex genes in Clostridium botulinum A1-A4 and B1 strains: BoNT/A3, /Ba4 and /B1 clusters are located within plasmids.</title>
        <authorList>
            <person name="Smith T.J."/>
            <person name="Hill K.K."/>
            <person name="Foley B.T."/>
            <person name="Detter J.C."/>
            <person name="Munk A.C."/>
            <person name="Bruce D.C."/>
            <person name="Doggett N.A."/>
            <person name="Smith L.A."/>
            <person name="Marks J.D."/>
            <person name="Xie G."/>
            <person name="Brettin T.S."/>
        </authorList>
    </citation>
    <scope>NUCLEOTIDE SEQUENCE [LARGE SCALE GENOMIC DNA]</scope>
    <source>
        <strain>ATCC 19397 / Type A</strain>
    </source>
</reference>
<sequence length="155" mass="16863">MRIGLGYDVHKLVENRPLIIGGVTIPHDKGLLGHSDADVLVHAIMDALLGAAALGDIGKHFPDSDKNFKNISSLLLLSKVKDLINKEGYKIVNIDCTIIAQKPKMLYHIDAMKKNICKCLKLDNNMLNIKATTEEGLGFTGKEEGISANAICLLD</sequence>
<evidence type="ECO:0000255" key="1">
    <source>
        <dbReference type="HAMAP-Rule" id="MF_00107"/>
    </source>
</evidence>
<name>ISPF_CLOB1</name>
<feature type="chain" id="PRO_1000022823" description="2-C-methyl-D-erythritol 2,4-cyclodiphosphate synthase">
    <location>
        <begin position="1"/>
        <end position="155"/>
    </location>
</feature>
<feature type="binding site" evidence="1">
    <location>
        <begin position="8"/>
        <end position="10"/>
    </location>
    <ligand>
        <name>4-CDP-2-C-methyl-D-erythritol 2-phosphate</name>
        <dbReference type="ChEBI" id="CHEBI:57919"/>
    </ligand>
</feature>
<feature type="binding site" evidence="1">
    <location>
        <position position="8"/>
    </location>
    <ligand>
        <name>a divalent metal cation</name>
        <dbReference type="ChEBI" id="CHEBI:60240"/>
    </ligand>
</feature>
<feature type="binding site" evidence="1">
    <location>
        <position position="10"/>
    </location>
    <ligand>
        <name>a divalent metal cation</name>
        <dbReference type="ChEBI" id="CHEBI:60240"/>
    </ligand>
</feature>
<feature type="binding site" evidence="1">
    <location>
        <begin position="34"/>
        <end position="35"/>
    </location>
    <ligand>
        <name>4-CDP-2-C-methyl-D-erythritol 2-phosphate</name>
        <dbReference type="ChEBI" id="CHEBI:57919"/>
    </ligand>
</feature>
<feature type="binding site" evidence="1">
    <location>
        <position position="42"/>
    </location>
    <ligand>
        <name>a divalent metal cation</name>
        <dbReference type="ChEBI" id="CHEBI:60240"/>
    </ligand>
</feature>
<feature type="binding site" evidence="1">
    <location>
        <begin position="56"/>
        <end position="58"/>
    </location>
    <ligand>
        <name>4-CDP-2-C-methyl-D-erythritol 2-phosphate</name>
        <dbReference type="ChEBI" id="CHEBI:57919"/>
    </ligand>
</feature>
<feature type="binding site" evidence="1">
    <location>
        <begin position="61"/>
        <end position="65"/>
    </location>
    <ligand>
        <name>4-CDP-2-C-methyl-D-erythritol 2-phosphate</name>
        <dbReference type="ChEBI" id="CHEBI:57919"/>
    </ligand>
</feature>
<feature type="binding site" evidence="1">
    <location>
        <begin position="100"/>
        <end position="106"/>
    </location>
    <ligand>
        <name>4-CDP-2-C-methyl-D-erythritol 2-phosphate</name>
        <dbReference type="ChEBI" id="CHEBI:57919"/>
    </ligand>
</feature>
<feature type="binding site" evidence="1">
    <location>
        <begin position="132"/>
        <end position="135"/>
    </location>
    <ligand>
        <name>4-CDP-2-C-methyl-D-erythritol 2-phosphate</name>
        <dbReference type="ChEBI" id="CHEBI:57919"/>
    </ligand>
</feature>
<feature type="binding site" evidence="1">
    <location>
        <position position="139"/>
    </location>
    <ligand>
        <name>4-CDP-2-C-methyl-D-erythritol 2-phosphate</name>
        <dbReference type="ChEBI" id="CHEBI:57919"/>
    </ligand>
</feature>
<feature type="binding site" evidence="1">
    <location>
        <position position="142"/>
    </location>
    <ligand>
        <name>4-CDP-2-C-methyl-D-erythritol 2-phosphate</name>
        <dbReference type="ChEBI" id="CHEBI:57919"/>
    </ligand>
</feature>
<feature type="site" description="Transition state stabilizer" evidence="1">
    <location>
        <position position="34"/>
    </location>
</feature>
<feature type="site" description="Transition state stabilizer" evidence="1">
    <location>
        <position position="133"/>
    </location>
</feature>
<keyword id="KW-0414">Isoprene biosynthesis</keyword>
<keyword id="KW-0456">Lyase</keyword>
<keyword id="KW-0479">Metal-binding</keyword>
<organism>
    <name type="scientific">Clostridium botulinum (strain ATCC 19397 / Type A)</name>
    <dbReference type="NCBI Taxonomy" id="441770"/>
    <lineage>
        <taxon>Bacteria</taxon>
        <taxon>Bacillati</taxon>
        <taxon>Bacillota</taxon>
        <taxon>Clostridia</taxon>
        <taxon>Eubacteriales</taxon>
        <taxon>Clostridiaceae</taxon>
        <taxon>Clostridium</taxon>
    </lineage>
</organism>
<comment type="function">
    <text evidence="1">Involved in the biosynthesis of isopentenyl diphosphate (IPP) and dimethylallyl diphosphate (DMAPP), two major building blocks of isoprenoid compounds. Catalyzes the conversion of 4-diphosphocytidyl-2-C-methyl-D-erythritol 2-phosphate (CDP-ME2P) to 2-C-methyl-D-erythritol 2,4-cyclodiphosphate (ME-CPP) with a corresponding release of cytidine 5-monophosphate (CMP).</text>
</comment>
<comment type="catalytic activity">
    <reaction evidence="1">
        <text>4-CDP-2-C-methyl-D-erythritol 2-phosphate = 2-C-methyl-D-erythritol 2,4-cyclic diphosphate + CMP</text>
        <dbReference type="Rhea" id="RHEA:23864"/>
        <dbReference type="ChEBI" id="CHEBI:57919"/>
        <dbReference type="ChEBI" id="CHEBI:58483"/>
        <dbReference type="ChEBI" id="CHEBI:60377"/>
        <dbReference type="EC" id="4.6.1.12"/>
    </reaction>
</comment>
<comment type="cofactor">
    <cofactor evidence="1">
        <name>a divalent metal cation</name>
        <dbReference type="ChEBI" id="CHEBI:60240"/>
    </cofactor>
    <text evidence="1">Binds 1 divalent metal cation per subunit.</text>
</comment>
<comment type="pathway">
    <text evidence="1">Isoprenoid biosynthesis; isopentenyl diphosphate biosynthesis via DXP pathway; isopentenyl diphosphate from 1-deoxy-D-xylulose 5-phosphate: step 4/6.</text>
</comment>
<comment type="subunit">
    <text evidence="1">Homotrimer.</text>
</comment>
<comment type="similarity">
    <text evidence="1">Belongs to the IspF family.</text>
</comment>
<protein>
    <recommendedName>
        <fullName evidence="1">2-C-methyl-D-erythritol 2,4-cyclodiphosphate synthase</fullName>
        <shortName evidence="1">MECDP-synthase</shortName>
        <shortName evidence="1">MECPP-synthase</shortName>
        <shortName evidence="1">MECPS</shortName>
        <ecNumber evidence="1">4.6.1.12</ecNumber>
    </recommendedName>
</protein>
<proteinExistence type="inferred from homology"/>
<dbReference type="EC" id="4.6.1.12" evidence="1"/>
<dbReference type="EMBL" id="CP000726">
    <property type="protein sequence ID" value="ABS33735.1"/>
    <property type="molecule type" value="Genomic_DNA"/>
</dbReference>
<dbReference type="RefSeq" id="WP_011947931.1">
    <property type="nucleotide sequence ID" value="NC_009697.1"/>
</dbReference>
<dbReference type="SMR" id="A7FQ95"/>
<dbReference type="GeneID" id="5184321"/>
<dbReference type="KEGG" id="cba:CLB_0102"/>
<dbReference type="HOGENOM" id="CLU_084630_2_0_9"/>
<dbReference type="UniPathway" id="UPA00056">
    <property type="reaction ID" value="UER00095"/>
</dbReference>
<dbReference type="GO" id="GO:0008685">
    <property type="term" value="F:2-C-methyl-D-erythritol 2,4-cyclodiphosphate synthase activity"/>
    <property type="evidence" value="ECO:0007669"/>
    <property type="project" value="UniProtKB-UniRule"/>
</dbReference>
<dbReference type="GO" id="GO:0046872">
    <property type="term" value="F:metal ion binding"/>
    <property type="evidence" value="ECO:0007669"/>
    <property type="project" value="UniProtKB-KW"/>
</dbReference>
<dbReference type="GO" id="GO:0019288">
    <property type="term" value="P:isopentenyl diphosphate biosynthetic process, methylerythritol 4-phosphate pathway"/>
    <property type="evidence" value="ECO:0007669"/>
    <property type="project" value="UniProtKB-UniRule"/>
</dbReference>
<dbReference type="GO" id="GO:0016114">
    <property type="term" value="P:terpenoid biosynthetic process"/>
    <property type="evidence" value="ECO:0007669"/>
    <property type="project" value="InterPro"/>
</dbReference>
<dbReference type="CDD" id="cd00554">
    <property type="entry name" value="MECDP_synthase"/>
    <property type="match status" value="1"/>
</dbReference>
<dbReference type="FunFam" id="3.30.1330.50:FF:000001">
    <property type="entry name" value="2-C-methyl-D-erythritol 2,4-cyclodiphosphate synthase"/>
    <property type="match status" value="1"/>
</dbReference>
<dbReference type="Gene3D" id="3.30.1330.50">
    <property type="entry name" value="2-C-methyl-D-erythritol 2,4-cyclodiphosphate synthase"/>
    <property type="match status" value="1"/>
</dbReference>
<dbReference type="HAMAP" id="MF_00107">
    <property type="entry name" value="IspF"/>
    <property type="match status" value="1"/>
</dbReference>
<dbReference type="InterPro" id="IPR003526">
    <property type="entry name" value="MECDP_synthase"/>
</dbReference>
<dbReference type="InterPro" id="IPR020555">
    <property type="entry name" value="MECDP_synthase_CS"/>
</dbReference>
<dbReference type="InterPro" id="IPR036571">
    <property type="entry name" value="MECDP_synthase_sf"/>
</dbReference>
<dbReference type="NCBIfam" id="TIGR00151">
    <property type="entry name" value="ispF"/>
    <property type="match status" value="1"/>
</dbReference>
<dbReference type="PANTHER" id="PTHR43181">
    <property type="entry name" value="2-C-METHYL-D-ERYTHRITOL 2,4-CYCLODIPHOSPHATE SYNTHASE, CHLOROPLASTIC"/>
    <property type="match status" value="1"/>
</dbReference>
<dbReference type="PANTHER" id="PTHR43181:SF1">
    <property type="entry name" value="2-C-METHYL-D-ERYTHRITOL 2,4-CYCLODIPHOSPHATE SYNTHASE, CHLOROPLASTIC"/>
    <property type="match status" value="1"/>
</dbReference>
<dbReference type="Pfam" id="PF02542">
    <property type="entry name" value="YgbB"/>
    <property type="match status" value="1"/>
</dbReference>
<dbReference type="SUPFAM" id="SSF69765">
    <property type="entry name" value="IpsF-like"/>
    <property type="match status" value="1"/>
</dbReference>
<dbReference type="PROSITE" id="PS01350">
    <property type="entry name" value="ISPF"/>
    <property type="match status" value="1"/>
</dbReference>
<gene>
    <name evidence="1" type="primary">ispF</name>
    <name type="ordered locus">CLB_0102</name>
</gene>
<accession>A7FQ95</accession>